<proteinExistence type="evidence at protein level"/>
<feature type="chain" id="PRO_0000076684" description="Iron-responsive element-binding protein 2">
    <location>
        <begin position="1"/>
        <end position="963"/>
    </location>
</feature>
<feature type="binding site" evidence="1">
    <location>
        <position position="512"/>
    </location>
    <ligand>
        <name>[4Fe-4S] cluster</name>
        <dbReference type="ChEBI" id="CHEBI:49883"/>
    </ligand>
</feature>
<feature type="binding site" evidence="1">
    <location>
        <position position="578"/>
    </location>
    <ligand>
        <name>[4Fe-4S] cluster</name>
        <dbReference type="ChEBI" id="CHEBI:49883"/>
    </ligand>
</feature>
<feature type="binding site" evidence="1">
    <location>
        <position position="581"/>
    </location>
    <ligand>
        <name>[4Fe-4S] cluster</name>
        <dbReference type="ChEBI" id="CHEBI:49883"/>
    </ligand>
</feature>
<feature type="splice variant" id="VSP_056823" description="In isoform 2." evidence="14 15">
    <original>H</original>
    <variation>V</variation>
    <location>
        <position position="342"/>
    </location>
</feature>
<feature type="splice variant" id="VSP_056824" description="In isoform 2." evidence="14 15">
    <location>
        <begin position="343"/>
        <end position="962"/>
    </location>
</feature>
<feature type="sequence variant" id="VAR_082271" description="In NDCAMA; may drastically decrease protein expression level." evidence="9">
    <location>
        <begin position="357"/>
        <end position="963"/>
    </location>
</feature>
<feature type="sequence variant" id="VAR_082272" description="In NDCAMA; may drastically decrease protein expression level." evidence="9">
    <location>
        <begin position="419"/>
        <end position="963"/>
    </location>
</feature>
<feature type="sequence variant" id="VAR_058410" description="In dbSNP:rs2230940." evidence="3 4 7 10 11 12 13">
    <original>I</original>
    <variation>T</variation>
    <location>
        <position position="580"/>
    </location>
</feature>
<feature type="sequence conflict" description="In Ref. 3; BAF85681." evidence="16" ref="3">
    <original>E</original>
    <variation>G</variation>
    <location>
        <position position="195"/>
    </location>
</feature>
<feature type="sequence conflict" description="In Ref. 1; AAA69901, 3; BAF85681 and 10; AAA79926." evidence="16" ref="1 3 10">
    <original>F</original>
    <variation>L</variation>
    <location>
        <position position="239"/>
    </location>
</feature>
<feature type="sequence conflict" description="In Ref. 10; AAA79926." evidence="16" ref="10">
    <original>Q</original>
    <variation>R</variation>
    <location>
        <position position="452"/>
    </location>
</feature>
<feature type="sequence conflict" description="In Ref. 3; BAF85681." evidence="16" ref="3">
    <original>T</original>
    <variation>P</variation>
    <location>
        <position position="458"/>
    </location>
</feature>
<feature type="strand" evidence="17">
    <location>
        <begin position="14"/>
        <end position="16"/>
    </location>
</feature>
<feature type="strand" evidence="17">
    <location>
        <begin position="19"/>
        <end position="22"/>
    </location>
</feature>
<feature type="strand" evidence="17">
    <location>
        <begin position="24"/>
        <end position="26"/>
    </location>
</feature>
<feature type="helix" evidence="17">
    <location>
        <begin position="28"/>
        <end position="31"/>
    </location>
</feature>
<feature type="turn" evidence="17">
    <location>
        <begin position="33"/>
        <end position="37"/>
    </location>
</feature>
<feature type="helix" evidence="17">
    <location>
        <begin position="42"/>
        <end position="51"/>
    </location>
</feature>
<feature type="strand" evidence="17">
    <location>
        <begin position="55"/>
        <end position="58"/>
    </location>
</feature>
<feature type="helix" evidence="17">
    <location>
        <begin position="63"/>
        <end position="66"/>
    </location>
</feature>
<feature type="turn" evidence="17">
    <location>
        <begin position="69"/>
        <end position="71"/>
    </location>
</feature>
<feature type="strand" evidence="17">
    <location>
        <begin position="77"/>
        <end position="80"/>
    </location>
</feature>
<feature type="strand" evidence="17">
    <location>
        <begin position="85"/>
        <end position="87"/>
    </location>
</feature>
<feature type="helix" evidence="17">
    <location>
        <begin position="93"/>
        <end position="107"/>
    </location>
</feature>
<feature type="turn" evidence="17">
    <location>
        <begin position="108"/>
        <end position="110"/>
    </location>
</feature>
<feature type="strand" evidence="17">
    <location>
        <begin position="122"/>
        <end position="125"/>
    </location>
</feature>
<feature type="helix" evidence="17">
    <location>
        <begin position="216"/>
        <end position="224"/>
    </location>
</feature>
<feature type="helix" evidence="17">
    <location>
        <begin position="226"/>
        <end position="238"/>
    </location>
</feature>
<feature type="strand" evidence="17">
    <location>
        <begin position="243"/>
        <end position="245"/>
    </location>
</feature>
<feature type="strand" evidence="17">
    <location>
        <begin position="250"/>
        <end position="254"/>
    </location>
</feature>
<feature type="helix" evidence="17">
    <location>
        <begin position="255"/>
        <end position="259"/>
    </location>
</feature>
<feature type="strand" evidence="17">
    <location>
        <begin position="263"/>
        <end position="269"/>
    </location>
</feature>
<feature type="strand" evidence="17">
    <location>
        <begin position="271"/>
        <end position="273"/>
    </location>
</feature>
<feature type="helix" evidence="17">
    <location>
        <begin position="283"/>
        <end position="289"/>
    </location>
</feature>
<feature type="helix" evidence="17">
    <location>
        <begin position="298"/>
        <end position="304"/>
    </location>
</feature>
<feature type="turn" evidence="17">
    <location>
        <begin position="305"/>
        <end position="307"/>
    </location>
</feature>
<feature type="strand" evidence="17">
    <location>
        <begin position="310"/>
        <end position="313"/>
    </location>
</feature>
<feature type="strand" evidence="17">
    <location>
        <begin position="320"/>
        <end position="324"/>
    </location>
</feature>
<feature type="helix" evidence="17">
    <location>
        <begin position="332"/>
        <end position="346"/>
    </location>
</feature>
<feature type="strand" evidence="17">
    <location>
        <begin position="350"/>
        <end position="352"/>
    </location>
</feature>
<feature type="strand" evidence="17">
    <location>
        <begin position="355"/>
        <end position="359"/>
    </location>
</feature>
<feature type="helix" evidence="17">
    <location>
        <begin position="360"/>
        <end position="362"/>
    </location>
</feature>
<feature type="helix" evidence="17">
    <location>
        <begin position="365"/>
        <end position="372"/>
    </location>
</feature>
<feature type="turn" evidence="17">
    <location>
        <begin position="373"/>
        <end position="379"/>
    </location>
</feature>
<feature type="helix" evidence="17">
    <location>
        <begin position="389"/>
        <end position="398"/>
    </location>
</feature>
<feature type="helix" evidence="17">
    <location>
        <begin position="402"/>
        <end position="414"/>
    </location>
</feature>
<feature type="strand" evidence="17">
    <location>
        <begin position="434"/>
        <end position="437"/>
    </location>
</feature>
<feature type="helix" evidence="17">
    <location>
        <begin position="438"/>
        <end position="440"/>
    </location>
</feature>
<feature type="helix" evidence="17">
    <location>
        <begin position="669"/>
        <end position="672"/>
    </location>
</feature>
<feature type="helix" evidence="17">
    <location>
        <begin position="674"/>
        <end position="677"/>
    </location>
</feature>
<feature type="helix" evidence="17">
    <location>
        <begin position="679"/>
        <end position="688"/>
    </location>
</feature>
<feature type="strand" evidence="17">
    <location>
        <begin position="706"/>
        <end position="708"/>
    </location>
</feature>
<feature type="strand" evidence="17">
    <location>
        <begin position="722"/>
        <end position="724"/>
    </location>
</feature>
<feature type="strand" evidence="17">
    <location>
        <begin position="739"/>
        <end position="745"/>
    </location>
</feature>
<feature type="helix" evidence="17">
    <location>
        <begin position="752"/>
        <end position="755"/>
    </location>
</feature>
<feature type="helix" evidence="17">
    <location>
        <begin position="766"/>
        <end position="773"/>
    </location>
</feature>
<feature type="turn" evidence="17">
    <location>
        <begin position="778"/>
        <end position="780"/>
    </location>
</feature>
<feature type="strand" evidence="17">
    <location>
        <begin position="783"/>
        <end position="785"/>
    </location>
</feature>
<feature type="helix" evidence="17">
    <location>
        <begin position="791"/>
        <end position="795"/>
    </location>
</feature>
<feature type="turn" evidence="17">
    <location>
        <begin position="807"/>
        <end position="809"/>
    </location>
</feature>
<feature type="strand" evidence="17">
    <location>
        <begin position="814"/>
        <end position="817"/>
    </location>
</feature>
<feature type="turn" evidence="17">
    <location>
        <begin position="819"/>
        <end position="821"/>
    </location>
</feature>
<feature type="strand" evidence="17">
    <location>
        <begin position="824"/>
        <end position="826"/>
    </location>
</feature>
<feature type="helix" evidence="17">
    <location>
        <begin position="827"/>
        <end position="836"/>
    </location>
</feature>
<feature type="strand" evidence="17">
    <location>
        <begin position="841"/>
        <end position="844"/>
    </location>
</feature>
<feature type="strand" evidence="17">
    <location>
        <begin position="847"/>
        <end position="849"/>
    </location>
</feature>
<feature type="strand" evidence="17">
    <location>
        <begin position="851"/>
        <end position="853"/>
    </location>
</feature>
<feature type="helix" evidence="17">
    <location>
        <begin position="860"/>
        <end position="865"/>
    </location>
</feature>
<feature type="strand" evidence="17">
    <location>
        <begin position="869"/>
        <end position="873"/>
    </location>
</feature>
<feature type="helix" evidence="17">
    <location>
        <begin position="877"/>
        <end position="884"/>
    </location>
</feature>
<feature type="turn" evidence="17">
    <location>
        <begin position="885"/>
        <end position="887"/>
    </location>
</feature>
<feature type="strand" evidence="17">
    <location>
        <begin position="889"/>
        <end position="893"/>
    </location>
</feature>
<feature type="helix" evidence="17">
    <location>
        <begin position="899"/>
        <end position="901"/>
    </location>
</feature>
<feature type="strand" evidence="17">
    <location>
        <begin position="908"/>
        <end position="911"/>
    </location>
</feature>
<feature type="strand" evidence="17">
    <location>
        <begin position="922"/>
        <end position="927"/>
    </location>
</feature>
<feature type="strand" evidence="17">
    <location>
        <begin position="934"/>
        <end position="938"/>
    </location>
</feature>
<feature type="helix" evidence="17">
    <location>
        <begin position="943"/>
        <end position="950"/>
    </location>
</feature>
<feature type="helix" evidence="17">
    <location>
        <begin position="954"/>
        <end position="961"/>
    </location>
</feature>
<gene>
    <name type="primary">IREB2</name>
</gene>
<keyword id="KW-0002">3D-structure</keyword>
<keyword id="KW-0004">4Fe-4S</keyword>
<keyword id="KW-0025">Alternative splicing</keyword>
<keyword id="KW-0963">Cytoplasm</keyword>
<keyword id="KW-0225">Disease variant</keyword>
<keyword id="KW-0408">Iron</keyword>
<keyword id="KW-0411">Iron-sulfur</keyword>
<keyword id="KW-0479">Metal-binding</keyword>
<keyword id="KW-0523">Neurodegeneration</keyword>
<keyword id="KW-1267">Proteomics identification</keyword>
<keyword id="KW-1185">Reference proteome</keyword>
<keyword id="KW-0694">RNA-binding</keyword>
<keyword id="KW-0832">Ubl conjugation</keyword>
<comment type="function">
    <text evidence="10">RNA-binding protein that binds to iron-responsive elements (IRES), which are stem-loop structures found in the 5'-UTR of ferritin, and delta aminolevulinic acid synthase mRNAs, and in the 3'-UTR of transferrin receptor mRNA. Binding to the IRE element in ferritin results in the repression of its mRNA translation. Binding of the protein to the transferrin receptor mRNA inhibits the degradation of this otherwise rapidly degraded mRNA.</text>
</comment>
<comment type="cofactor">
    <cofactor evidence="1">
        <name>[4Fe-4S] cluster</name>
        <dbReference type="ChEBI" id="CHEBI:49883"/>
    </cofactor>
    <text evidence="1">Binds 1 [4Fe-4S] cluster per subunit. [4Fe-4S]-binding affects RNA-binding activity, thereby inhibiting activity of the protein.</text>
</comment>
<comment type="subunit">
    <text evidence="2 5 6 8">Interacts with RBCK1 isoform 1 and isoform 2 only in iron-rich conditions (PubMed:12629548). Interacts (when associated with the 4Fe-4S) with FBXL5 (PubMed:19762596, PubMed:19762597). Interacts with CIAO1 and CIAO2A (PubMed:23891004).</text>
</comment>
<comment type="interaction">
    <interactant intactId="EBI-2805796">
        <id>P48200</id>
    </interactant>
    <interactant intactId="EBI-2692340">
        <id>Q9UKA1</id>
        <label>FBXL5</label>
    </interactant>
    <organismsDiffer>false</organismsDiffer>
    <experiments>2</experiments>
</comment>
<comment type="subcellular location">
    <subcellularLocation>
        <location>Cytoplasm</location>
    </subcellularLocation>
</comment>
<comment type="alternative products">
    <event type="alternative splicing"/>
    <isoform>
        <id>P48200-1</id>
        <name>1</name>
        <sequence type="displayed"/>
    </isoform>
    <isoform>
        <id>P48200-2</id>
        <name>2</name>
        <sequence type="described" ref="VSP_056823 VSP_056824"/>
    </isoform>
</comment>
<comment type="PTM">
    <text evidence="2 5 6">Ubiquitinated and degraded by the proteasome in presence of high level of iron and oxygen. Ubiquitinated by a SCF complex containing FBXL5. Upon iron and oxygen depletion FBXL5 is degraded, preventing ubiquitination and allowing its RNA-binding activity.</text>
</comment>
<comment type="disease" evidence="9">
    <disease id="DI-05576">
        <name>Neurodegeneration, early-onset, with choreoathetoid movements and microcytic anemia</name>
        <acronym>NDCAMA</acronym>
        <description>An autosomal recessive disorder characterized by severe neurological and extra-neurological manifestations. Clinical features include early-onset global developmental delay, absent speech, dystonia, spasticity, choreoathetoid movement disorder, seizures, and microcytic hypochromic anaemia unresponsive to iron supplementation.</description>
        <dbReference type="MIM" id="618451"/>
    </disease>
    <text>The disease is caused by variants affecting the gene represented in this entry.</text>
</comment>
<comment type="similarity">
    <text evidence="16">Belongs to the aconitase/IPM isomerase family.</text>
</comment>
<comment type="sequence caution" evidence="16">
    <conflict type="frameshift">
        <sequence resource="EMBL-CDS" id="AAA79926"/>
    </conflict>
</comment>
<comment type="sequence caution" evidence="16">
    <conflict type="frameshift">
        <sequence resource="EMBL-CDS" id="BAD92640"/>
    </conflict>
</comment>
<accession>P48200</accession>
<accession>A0A0A6YY96</accession>
<accession>A8KAC7</accession>
<accession>E1CJT9</accession>
<accession>H0YKU0</accession>
<accession>Q13095</accession>
<accession>Q1HE21</accession>
<accession>Q59FQ7</accession>
<accession>Q8WVK6</accession>
<accession>Q9UF17</accession>
<reference key="1">
    <citation type="journal article" date="1994" name="J. Biol. Chem.">
        <title>Molecular characterization of a second iron-responsive element binding protein, iron regulatory protein 2. Structure, function, and post-translational regulation.</title>
        <authorList>
            <person name="Samaniego F."/>
            <person name="Chin J."/>
            <person name="Iwai K."/>
            <person name="Rouault T.A."/>
            <person name="Klausner R.D."/>
        </authorList>
    </citation>
    <scope>NUCLEOTIDE SEQUENCE [MRNA] (ISOFORM 1)</scope>
    <scope>FUNCTION</scope>
    <scope>RNA-BINDING</scope>
    <scope>VARIANT THR-580</scope>
</reference>
<reference key="2">
    <citation type="submission" date="2010-09" db="EMBL/GenBank/DDBJ databases">
        <title>IgA nephropathy-related gene.</title>
        <authorList>
            <person name="Ishiwata T."/>
            <person name="Sakurada M."/>
            <person name="Nishimura A."/>
            <person name="Nakagawa S."/>
            <person name="Nishi T."/>
            <person name="Kuga T."/>
            <person name="Sawada S."/>
            <person name="Takei M."/>
        </authorList>
    </citation>
    <scope>NUCLEOTIDE SEQUENCE [MRNA] (ISOFORM 2)</scope>
</reference>
<reference key="3">
    <citation type="journal article" date="2004" name="Nat. Genet.">
        <title>Complete sequencing and characterization of 21,243 full-length human cDNAs.</title>
        <authorList>
            <person name="Ota T."/>
            <person name="Suzuki Y."/>
            <person name="Nishikawa T."/>
            <person name="Otsuki T."/>
            <person name="Sugiyama T."/>
            <person name="Irie R."/>
            <person name="Wakamatsu A."/>
            <person name="Hayashi K."/>
            <person name="Sato H."/>
            <person name="Nagai K."/>
            <person name="Kimura K."/>
            <person name="Makita H."/>
            <person name="Sekine M."/>
            <person name="Obayashi M."/>
            <person name="Nishi T."/>
            <person name="Shibahara T."/>
            <person name="Tanaka T."/>
            <person name="Ishii S."/>
            <person name="Yamamoto J."/>
            <person name="Saito K."/>
            <person name="Kawai Y."/>
            <person name="Isono Y."/>
            <person name="Nakamura Y."/>
            <person name="Nagahari K."/>
            <person name="Murakami K."/>
            <person name="Yasuda T."/>
            <person name="Iwayanagi T."/>
            <person name="Wagatsuma M."/>
            <person name="Shiratori A."/>
            <person name="Sudo H."/>
            <person name="Hosoiri T."/>
            <person name="Kaku Y."/>
            <person name="Kodaira H."/>
            <person name="Kondo H."/>
            <person name="Sugawara M."/>
            <person name="Takahashi M."/>
            <person name="Kanda K."/>
            <person name="Yokoi T."/>
            <person name="Furuya T."/>
            <person name="Kikkawa E."/>
            <person name="Omura Y."/>
            <person name="Abe K."/>
            <person name="Kamihara K."/>
            <person name="Katsuta N."/>
            <person name="Sato K."/>
            <person name="Tanikawa M."/>
            <person name="Yamazaki M."/>
            <person name="Ninomiya K."/>
            <person name="Ishibashi T."/>
            <person name="Yamashita H."/>
            <person name="Murakawa K."/>
            <person name="Fujimori K."/>
            <person name="Tanai H."/>
            <person name="Kimata M."/>
            <person name="Watanabe M."/>
            <person name="Hiraoka S."/>
            <person name="Chiba Y."/>
            <person name="Ishida S."/>
            <person name="Ono Y."/>
            <person name="Takiguchi S."/>
            <person name="Watanabe S."/>
            <person name="Yosida M."/>
            <person name="Hotuta T."/>
            <person name="Kusano J."/>
            <person name="Kanehori K."/>
            <person name="Takahashi-Fujii A."/>
            <person name="Hara H."/>
            <person name="Tanase T.-O."/>
            <person name="Nomura Y."/>
            <person name="Togiya S."/>
            <person name="Komai F."/>
            <person name="Hara R."/>
            <person name="Takeuchi K."/>
            <person name="Arita M."/>
            <person name="Imose N."/>
            <person name="Musashino K."/>
            <person name="Yuuki H."/>
            <person name="Oshima A."/>
            <person name="Sasaki N."/>
            <person name="Aotsuka S."/>
            <person name="Yoshikawa Y."/>
            <person name="Matsunawa H."/>
            <person name="Ichihara T."/>
            <person name="Shiohata N."/>
            <person name="Sano S."/>
            <person name="Moriya S."/>
            <person name="Momiyama H."/>
            <person name="Satoh N."/>
            <person name="Takami S."/>
            <person name="Terashima Y."/>
            <person name="Suzuki O."/>
            <person name="Nakagawa S."/>
            <person name="Senoh A."/>
            <person name="Mizoguchi H."/>
            <person name="Goto Y."/>
            <person name="Shimizu F."/>
            <person name="Wakebe H."/>
            <person name="Hishigaki H."/>
            <person name="Watanabe T."/>
            <person name="Sugiyama A."/>
            <person name="Takemoto M."/>
            <person name="Kawakami B."/>
            <person name="Yamazaki M."/>
            <person name="Watanabe K."/>
            <person name="Kumagai A."/>
            <person name="Itakura S."/>
            <person name="Fukuzumi Y."/>
            <person name="Fujimori Y."/>
            <person name="Komiyama M."/>
            <person name="Tashiro H."/>
            <person name="Tanigami A."/>
            <person name="Fujiwara T."/>
            <person name="Ono T."/>
            <person name="Yamada K."/>
            <person name="Fujii Y."/>
            <person name="Ozaki K."/>
            <person name="Hirao M."/>
            <person name="Ohmori Y."/>
            <person name="Kawabata A."/>
            <person name="Hikiji T."/>
            <person name="Kobatake N."/>
            <person name="Inagaki H."/>
            <person name="Ikema Y."/>
            <person name="Okamoto S."/>
            <person name="Okitani R."/>
            <person name="Kawakami T."/>
            <person name="Noguchi S."/>
            <person name="Itoh T."/>
            <person name="Shigeta K."/>
            <person name="Senba T."/>
            <person name="Matsumura K."/>
            <person name="Nakajima Y."/>
            <person name="Mizuno T."/>
            <person name="Morinaga M."/>
            <person name="Sasaki M."/>
            <person name="Togashi T."/>
            <person name="Oyama M."/>
            <person name="Hata H."/>
            <person name="Watanabe M."/>
            <person name="Komatsu T."/>
            <person name="Mizushima-Sugano J."/>
            <person name="Satoh T."/>
            <person name="Shirai Y."/>
            <person name="Takahashi Y."/>
            <person name="Nakagawa K."/>
            <person name="Okumura K."/>
            <person name="Nagase T."/>
            <person name="Nomura N."/>
            <person name="Kikuchi H."/>
            <person name="Masuho Y."/>
            <person name="Yamashita R."/>
            <person name="Nakai K."/>
            <person name="Yada T."/>
            <person name="Nakamura Y."/>
            <person name="Ohara O."/>
            <person name="Isogai T."/>
            <person name="Sugano S."/>
        </authorList>
    </citation>
    <scope>NUCLEOTIDE SEQUENCE [LARGE SCALE MRNA] (ISOFORM 1)</scope>
    <scope>VARIANT THR-580</scope>
    <source>
        <tissue>Trachea</tissue>
    </source>
</reference>
<reference key="4">
    <citation type="submission" date="2005-03" db="EMBL/GenBank/DDBJ databases">
        <title>Homo sapiens protein coding cDNA.</title>
        <authorList>
            <person name="Totoki Y."/>
            <person name="Toyoda A."/>
            <person name="Takeda T."/>
            <person name="Sakaki Y."/>
            <person name="Tanaka A."/>
            <person name="Yokoyama S."/>
            <person name="Ohara O."/>
            <person name="Nagase T."/>
            <person name="Kikuno R.F."/>
        </authorList>
    </citation>
    <scope>NUCLEOTIDE SEQUENCE [LARGE SCALE MRNA] (ISOFORM 1)</scope>
    <scope>VARIANT THR-580</scope>
    <source>
        <tissue>Brain</tissue>
    </source>
</reference>
<reference key="5">
    <citation type="submission" date="2006-04" db="EMBL/GenBank/DDBJ databases">
        <authorList>
            <consortium name="NIEHS SNPs program"/>
        </authorList>
    </citation>
    <scope>NUCLEOTIDE SEQUENCE [GENOMIC DNA]</scope>
    <scope>VARIANT THR-580</scope>
</reference>
<reference key="6">
    <citation type="journal article" date="2006" name="Nature">
        <title>Analysis of the DNA sequence and duplication history of human chromosome 15.</title>
        <authorList>
            <person name="Zody M.C."/>
            <person name="Garber M."/>
            <person name="Sharpe T."/>
            <person name="Young S.K."/>
            <person name="Rowen L."/>
            <person name="O'Neill K."/>
            <person name="Whittaker C.A."/>
            <person name="Kamal M."/>
            <person name="Chang J.L."/>
            <person name="Cuomo C.A."/>
            <person name="Dewar K."/>
            <person name="FitzGerald M.G."/>
            <person name="Kodira C.D."/>
            <person name="Madan A."/>
            <person name="Qin S."/>
            <person name="Yang X."/>
            <person name="Abbasi N."/>
            <person name="Abouelleil A."/>
            <person name="Arachchi H.M."/>
            <person name="Baradarani L."/>
            <person name="Birditt B."/>
            <person name="Bloom S."/>
            <person name="Bloom T."/>
            <person name="Borowsky M.L."/>
            <person name="Burke J."/>
            <person name="Butler J."/>
            <person name="Cook A."/>
            <person name="DeArellano K."/>
            <person name="DeCaprio D."/>
            <person name="Dorris L. III"/>
            <person name="Dors M."/>
            <person name="Eichler E.E."/>
            <person name="Engels R."/>
            <person name="Fahey J."/>
            <person name="Fleetwood P."/>
            <person name="Friedman C."/>
            <person name="Gearin G."/>
            <person name="Hall J.L."/>
            <person name="Hensley G."/>
            <person name="Johnson E."/>
            <person name="Jones C."/>
            <person name="Kamat A."/>
            <person name="Kaur A."/>
            <person name="Locke D.P."/>
            <person name="Madan A."/>
            <person name="Munson G."/>
            <person name="Jaffe D.B."/>
            <person name="Lui A."/>
            <person name="Macdonald P."/>
            <person name="Mauceli E."/>
            <person name="Naylor J.W."/>
            <person name="Nesbitt R."/>
            <person name="Nicol R."/>
            <person name="O'Leary S.B."/>
            <person name="Ratcliffe A."/>
            <person name="Rounsley S."/>
            <person name="She X."/>
            <person name="Sneddon K.M.B."/>
            <person name="Stewart S."/>
            <person name="Sougnez C."/>
            <person name="Stone S.M."/>
            <person name="Topham K."/>
            <person name="Vincent D."/>
            <person name="Wang S."/>
            <person name="Zimmer A.R."/>
            <person name="Birren B.W."/>
            <person name="Hood L."/>
            <person name="Lander E.S."/>
            <person name="Nusbaum C."/>
        </authorList>
    </citation>
    <scope>NUCLEOTIDE SEQUENCE [LARGE SCALE GENOMIC DNA]</scope>
</reference>
<reference key="7">
    <citation type="submission" date="2005-09" db="EMBL/GenBank/DDBJ databases">
        <authorList>
            <person name="Mural R.J."/>
            <person name="Istrail S."/>
            <person name="Sutton G.G."/>
            <person name="Florea L."/>
            <person name="Halpern A.L."/>
            <person name="Mobarry C.M."/>
            <person name="Lippert R."/>
            <person name="Walenz B."/>
            <person name="Shatkay H."/>
            <person name="Dew I."/>
            <person name="Miller J.R."/>
            <person name="Flanigan M.J."/>
            <person name="Edwards N.J."/>
            <person name="Bolanos R."/>
            <person name="Fasulo D."/>
            <person name="Halldorsson B.V."/>
            <person name="Hannenhalli S."/>
            <person name="Turner R."/>
            <person name="Yooseph S."/>
            <person name="Lu F."/>
            <person name="Nusskern D.R."/>
            <person name="Shue B.C."/>
            <person name="Zheng X.H."/>
            <person name="Zhong F."/>
            <person name="Delcher A.L."/>
            <person name="Huson D.H."/>
            <person name="Kravitz S.A."/>
            <person name="Mouchard L."/>
            <person name="Reinert K."/>
            <person name="Remington K.A."/>
            <person name="Clark A.G."/>
            <person name="Waterman M.S."/>
            <person name="Eichler E.E."/>
            <person name="Adams M.D."/>
            <person name="Hunkapiller M.W."/>
            <person name="Myers E.W."/>
            <person name="Venter J.C."/>
        </authorList>
    </citation>
    <scope>NUCLEOTIDE SEQUENCE [LARGE SCALE GENOMIC DNA]</scope>
    <scope>VARIANT THR-580</scope>
</reference>
<reference key="8">
    <citation type="journal article" date="2004" name="Genome Res.">
        <title>The status, quality, and expansion of the NIH full-length cDNA project: the Mammalian Gene Collection (MGC).</title>
        <authorList>
            <consortium name="The MGC Project Team"/>
        </authorList>
    </citation>
    <scope>NUCLEOTIDE SEQUENCE [LARGE SCALE MRNA] (ISOFORMS 1 AND 2)</scope>
    <scope>VARIANT THR-580</scope>
    <source>
        <tissue>Brain</tissue>
    </source>
</reference>
<reference key="9">
    <citation type="journal article" date="1990" name="Proc. Natl. Acad. Sci. U.S.A.">
        <title>Cloning of the cDNA encoding an RNA regulatory protein -- the human iron-responsive element-binding protein.</title>
        <authorList>
            <person name="Rouault T.A."/>
            <person name="Tang C.K."/>
            <person name="Kaptain S."/>
            <person name="Burgess W.H."/>
            <person name="Haile D.J."/>
            <person name="Samaniego F."/>
            <person name="McBride O.W."/>
            <person name="Harford J.B."/>
            <person name="Klausner R.D."/>
        </authorList>
    </citation>
    <scope>PARTIAL NUCLEOTIDE SEQUENCE [MRNA]</scope>
    <scope>VARIANT THR-580</scope>
</reference>
<reference key="10">
    <citation type="journal article" date="1995" name="J. Biol. Chem.">
        <title>Characterization and expression of iron regulatory protein 2 (IRP2). Presence of multiple IRP2 transcripts regulated by intracellular iron levels.</title>
        <authorList>
            <person name="Guo B."/>
            <person name="Brown F.M."/>
            <person name="Phillips J.D."/>
            <person name="Yu Y."/>
            <person name="Leibold E.A."/>
        </authorList>
    </citation>
    <scope>NUCLEOTIDE SEQUENCE [MRNA] OF 12-963 (ISOFORM 1)</scope>
    <source>
        <tissue>Brain</tissue>
    </source>
</reference>
<reference key="11">
    <citation type="submission" date="2000-07" db="EMBL/GenBank/DDBJ databases">
        <authorList>
            <consortium name="The European IMAGE consortium"/>
        </authorList>
    </citation>
    <scope>NUCLEOTIDE SEQUENCE [LARGE SCALE MRNA] OF 847-963 (ISOFORM 1)</scope>
</reference>
<reference key="12">
    <citation type="journal article" date="2003" name="Nat. Cell Biol.">
        <title>Identification of the ubiquitin-protein ligase that recognizes oxidized IRP2.</title>
        <authorList>
            <person name="Yamanaka K."/>
            <person name="Ishikawa H."/>
            <person name="Megumi Y."/>
            <person name="Tokunaga F."/>
            <person name="Kanie M."/>
            <person name="Rouault T.A."/>
            <person name="Morishima I."/>
            <person name="Minato N."/>
            <person name="Ishimori K."/>
            <person name="Iwai K."/>
        </authorList>
    </citation>
    <scope>UBIQUITINATION</scope>
    <scope>INTERACTION WITH RBCK1</scope>
</reference>
<reference key="13">
    <citation type="journal article" date="2009" name="Science">
        <title>Control of iron homeostasis by an iron-regulated ubiquitin ligase.</title>
        <authorList>
            <person name="Vashisht A.A."/>
            <person name="Zumbrennen K.B."/>
            <person name="Huang X."/>
            <person name="Powers D.N."/>
            <person name="Durazo A."/>
            <person name="Sun D."/>
            <person name="Bhaskaran N."/>
            <person name="Persson A."/>
            <person name="Uhlen M."/>
            <person name="Sangfelt O."/>
            <person name="Spruck C."/>
            <person name="Leibold E.A."/>
            <person name="Wohlschlegel J.A."/>
        </authorList>
    </citation>
    <scope>UBIQUITINATION</scope>
    <scope>INTERACTION WITH FBXL5</scope>
</reference>
<reference key="14">
    <citation type="journal article" date="2009" name="Science">
        <title>An E3 ligase possessing an iron responsive hemerythrin domain is a regulator of iron homeostasis.</title>
        <authorList>
            <person name="Salahudeen A.A."/>
            <person name="Thompson J.W."/>
            <person name="Ruiz J.C."/>
            <person name="Ma H.-W."/>
            <person name="Kinch L.N."/>
            <person name="Li Q."/>
            <person name="Grishin N.V."/>
            <person name="Bruick R.K."/>
        </authorList>
    </citation>
    <scope>UBIQUITINATION</scope>
    <scope>INTERACTION WITH FBXL5</scope>
</reference>
<reference key="15">
    <citation type="journal article" date="2011" name="BMC Syst. Biol.">
        <title>Initial characterization of the human central proteome.</title>
        <authorList>
            <person name="Burkard T.R."/>
            <person name="Planyavsky M."/>
            <person name="Kaupe I."/>
            <person name="Breitwieser F.P."/>
            <person name="Buerckstuemmer T."/>
            <person name="Bennett K.L."/>
            <person name="Superti-Furga G."/>
            <person name="Colinge J."/>
        </authorList>
    </citation>
    <scope>IDENTIFICATION BY MASS SPECTROMETRY [LARGE SCALE ANALYSIS]</scope>
</reference>
<reference key="16">
    <citation type="journal article" date="2008" name="Proc. Natl. Acad. Sci. U.S.A.">
        <title>A quantitative atlas of mitotic phosphorylation.</title>
        <authorList>
            <person name="Dephoure N."/>
            <person name="Zhou C."/>
            <person name="Villen J."/>
            <person name="Beausoleil S.A."/>
            <person name="Bakalarski C.E."/>
            <person name="Elledge S.J."/>
            <person name="Gygi S.P."/>
        </authorList>
    </citation>
    <scope>IDENTIFICATION BY MASS SPECTROMETRY [LARGE SCALE ANALYSIS]</scope>
    <source>
        <tissue>Cervix carcinoma</tissue>
    </source>
</reference>
<reference key="17">
    <citation type="journal article" date="2013" name="Cell Metab.">
        <title>Human CIA2A-FAM96A and CIA2B-FAM96B integrate iron homeostasis and maturation of different subsets of cytosolic-nuclear iron-sulfur proteins.</title>
        <authorList>
            <person name="Stehling O."/>
            <person name="Mascarenhas J."/>
            <person name="Vashisht A.A."/>
            <person name="Sheftel A.D."/>
            <person name="Niggemeyer B."/>
            <person name="Roesser R."/>
            <person name="Pierik A.J."/>
            <person name="Wohlschlegel J.A."/>
            <person name="Lill R."/>
        </authorList>
    </citation>
    <scope>INTERACTION WITH CIAO1 AND CIAO2A</scope>
</reference>
<reference key="18">
    <citation type="journal article" date="2019" name="Brain">
        <title>Absence of iron-responsive element-binding protein 2 causes a novel neurodegenerative syndrome.</title>
        <authorList>
            <person name="Costain G."/>
            <person name="Ghosh M.C."/>
            <person name="Maio N."/>
            <person name="Carnevale A."/>
            <person name="Si Y.C."/>
            <person name="Rouault T.A."/>
            <person name="Yoon G."/>
        </authorList>
    </citation>
    <scope>INVOLVEMENT IN NDCAMA</scope>
    <scope>VARIANTS NDCAMA 357-GLY--SER-963 DEL AND 419-ARG--SER-963 DEL</scope>
    <scope>CHARACTERIZATION OF VARIANTS NDCAMA 357-GLY--SER-963 DEL AND 419-ARG--SER-963 DEL</scope>
</reference>
<evidence type="ECO:0000250" key="1"/>
<evidence type="ECO:0000269" key="2">
    <source>
    </source>
</evidence>
<evidence type="ECO:0000269" key="3">
    <source>
    </source>
</evidence>
<evidence type="ECO:0000269" key="4">
    <source>
    </source>
</evidence>
<evidence type="ECO:0000269" key="5">
    <source>
    </source>
</evidence>
<evidence type="ECO:0000269" key="6">
    <source>
    </source>
</evidence>
<evidence type="ECO:0000269" key="7">
    <source>
    </source>
</evidence>
<evidence type="ECO:0000269" key="8">
    <source>
    </source>
</evidence>
<evidence type="ECO:0000269" key="9">
    <source>
    </source>
</evidence>
<evidence type="ECO:0000269" key="10">
    <source>
    </source>
</evidence>
<evidence type="ECO:0000269" key="11">
    <source ref="4"/>
</evidence>
<evidence type="ECO:0000269" key="12">
    <source ref="5"/>
</evidence>
<evidence type="ECO:0000269" key="13">
    <source ref="7"/>
</evidence>
<evidence type="ECO:0000303" key="14">
    <source>
    </source>
</evidence>
<evidence type="ECO:0000303" key="15">
    <source ref="2"/>
</evidence>
<evidence type="ECO:0000305" key="16"/>
<evidence type="ECO:0007829" key="17">
    <source>
        <dbReference type="PDB" id="6VCD"/>
    </source>
</evidence>
<sequence>MDAPKAGYAFEYLIETLNDSSHKKFFDVSKLGTKYDVLPYSIRVLLEAAVRNCDGFLMKKEDVMNILDWKTKQSNVEVPFFPARVLLQDFTGIPAMVDFAAMREAVKTLGGDPEKVHPACPTDLTVDHSLQIDFSKCAIQNAPNPGGGDLQKAGKLSPLKVQPKKLPCRGQTTCRGSCDSGELGRNSGTFSSQIENTPILCPFHLQPVPEPETVLKNQEVEFGRNRERLQFFKWSSRVFKNVAVIPPGTGMAHQINLEYLSRVVFEEKDLLFPDSVVGTDSHITMVNGLGILGWGVGGIETEAVMLGLPVSLTLPEVVGCELTGSSNPFVTSIDVVLGITKHLRQVGVAGKFVEFFGSGVSQLSIVDRTTIANMCPEYGAILSFFPVDNVTLKHLEHTGFSKAKLESMETYLKAVKLFRNDQNSSGEPEYSQVIQINLNSIVPSVSGPKRPQDRVAVTDMKSDFQACLNEKVGFKGFQIAAEKQKDIVSIHYEGSEYKLSHGSVVIAAVISCTNNCNPSVMLAAGLLAKKAVEAGLRVKPYIRTSLSPGSGMVTHYLSSSGVLPYLSKLGFEIVGYGCSICVGNTAPLSDAVLNAVKQGDLVTCGILSGNKNFEGRLCDCVRANYLASPPLVVAYAIAGTVNIDFQTEPLGTDPTGKNIYLHDIWPSREEVHRVEEEHVILSMFKALKDKIEMGNKRWNSLEAPDSVLFPWDLKSTYIRCPSFFDKLTKEPIALQAIENAHVLLYLGDSVTTDHISPAGSIARNSAAAKYLTNRGLTPREFNSYGARRGNDAVMTRGTFANIKLFNKFIGKPAPKTIHFPSGQTLDVFEAAELYQKEGIPLIILAGKKYGSGNSRDWAAKGPYLLGVKAVLAESYEKIHKDHLIGIGIAPLQFLPGENADSLGLSGRETFSLTFPEELSPGITLNIQTSTGKVFSVIASFEDDVEITLYKHGGLLNFVARKFS</sequence>
<organism>
    <name type="scientific">Homo sapiens</name>
    <name type="common">Human</name>
    <dbReference type="NCBI Taxonomy" id="9606"/>
    <lineage>
        <taxon>Eukaryota</taxon>
        <taxon>Metazoa</taxon>
        <taxon>Chordata</taxon>
        <taxon>Craniata</taxon>
        <taxon>Vertebrata</taxon>
        <taxon>Euteleostomi</taxon>
        <taxon>Mammalia</taxon>
        <taxon>Eutheria</taxon>
        <taxon>Euarchontoglires</taxon>
        <taxon>Primates</taxon>
        <taxon>Haplorrhini</taxon>
        <taxon>Catarrhini</taxon>
        <taxon>Hominidae</taxon>
        <taxon>Homo</taxon>
    </lineage>
</organism>
<dbReference type="EMBL" id="M58511">
    <property type="protein sequence ID" value="AAA69901.1"/>
    <property type="molecule type" value="mRNA"/>
</dbReference>
<dbReference type="EMBL" id="AB586699">
    <property type="protein sequence ID" value="BAJ19024.1"/>
    <property type="molecule type" value="mRNA"/>
</dbReference>
<dbReference type="EMBL" id="AK292992">
    <property type="protein sequence ID" value="BAF85681.1"/>
    <property type="molecule type" value="mRNA"/>
</dbReference>
<dbReference type="EMBL" id="AB209403">
    <property type="protein sequence ID" value="BAD92640.1"/>
    <property type="status" value="ALT_FRAME"/>
    <property type="molecule type" value="mRNA"/>
</dbReference>
<dbReference type="EMBL" id="DQ496102">
    <property type="protein sequence ID" value="ABF47091.1"/>
    <property type="molecule type" value="Genomic_DNA"/>
</dbReference>
<dbReference type="EMBL" id="AC011270">
    <property type="status" value="NOT_ANNOTATED_CDS"/>
    <property type="molecule type" value="Genomic_DNA"/>
</dbReference>
<dbReference type="EMBL" id="AC027228">
    <property type="status" value="NOT_ANNOTATED_CDS"/>
    <property type="molecule type" value="Genomic_DNA"/>
</dbReference>
<dbReference type="EMBL" id="KF459563">
    <property type="status" value="NOT_ANNOTATED_CDS"/>
    <property type="molecule type" value="Genomic_DNA"/>
</dbReference>
<dbReference type="EMBL" id="CH471136">
    <property type="protein sequence ID" value="EAW99169.1"/>
    <property type="molecule type" value="Genomic_DNA"/>
</dbReference>
<dbReference type="EMBL" id="BC017880">
    <property type="protein sequence ID" value="AAH17880.1"/>
    <property type="molecule type" value="mRNA"/>
</dbReference>
<dbReference type="EMBL" id="BC117481">
    <property type="protein sequence ID" value="AAI17482.1"/>
    <property type="molecule type" value="mRNA"/>
</dbReference>
<dbReference type="EMBL" id="BC117483">
    <property type="protein sequence ID" value="AAI17484.1"/>
    <property type="molecule type" value="mRNA"/>
</dbReference>
<dbReference type="EMBL" id="U20180">
    <property type="protein sequence ID" value="AAA79926.1"/>
    <property type="status" value="ALT_FRAME"/>
    <property type="molecule type" value="mRNA"/>
</dbReference>
<dbReference type="EMBL" id="AL133439">
    <property type="protein sequence ID" value="CAB62825.1"/>
    <property type="molecule type" value="mRNA"/>
</dbReference>
<dbReference type="CCDS" id="CCDS10302.1">
    <molecule id="P48200-1"/>
</dbReference>
<dbReference type="CCDS" id="CCDS81912.1">
    <molecule id="P48200-2"/>
</dbReference>
<dbReference type="PIR" id="B57238">
    <property type="entry name" value="B57238"/>
</dbReference>
<dbReference type="RefSeq" id="NP_001307870.1">
    <property type="nucleotide sequence ID" value="NM_001320941.1"/>
</dbReference>
<dbReference type="RefSeq" id="NP_001307872.1">
    <molecule id="P48200-2"/>
    <property type="nucleotide sequence ID" value="NM_001320943.2"/>
</dbReference>
<dbReference type="RefSeq" id="NP_004127.2">
    <molecule id="P48200-1"/>
    <property type="nucleotide sequence ID" value="NM_004136.4"/>
</dbReference>
<dbReference type="PDB" id="6VCD">
    <property type="method" value="EM"/>
    <property type="resolution" value="3.00 A"/>
    <property type="chains" value="A=1-963"/>
</dbReference>
<dbReference type="PDBsum" id="6VCD"/>
<dbReference type="SMR" id="P48200"/>
<dbReference type="BioGRID" id="109866">
    <property type="interactions" value="70"/>
</dbReference>
<dbReference type="FunCoup" id="P48200">
    <property type="interactions" value="1729"/>
</dbReference>
<dbReference type="IntAct" id="P48200">
    <property type="interactions" value="30"/>
</dbReference>
<dbReference type="STRING" id="9606.ENSP00000258886"/>
<dbReference type="GlyGen" id="P48200">
    <property type="glycosylation" value="1 site, 1 O-linked glycan (1 site)"/>
</dbReference>
<dbReference type="iPTMnet" id="P48200"/>
<dbReference type="PhosphoSitePlus" id="P48200"/>
<dbReference type="BioMuta" id="IREB2"/>
<dbReference type="DMDM" id="308153591"/>
<dbReference type="jPOST" id="P48200"/>
<dbReference type="MassIVE" id="P48200"/>
<dbReference type="PaxDb" id="9606-ENSP00000258886"/>
<dbReference type="PeptideAtlas" id="P48200"/>
<dbReference type="ProteomicsDB" id="39753"/>
<dbReference type="ProteomicsDB" id="55871">
    <molecule id="P48200-1"/>
</dbReference>
<dbReference type="Pumba" id="P48200"/>
<dbReference type="Antibodypedia" id="27620">
    <property type="antibodies" value="340 antibodies from 34 providers"/>
</dbReference>
<dbReference type="DNASU" id="3658"/>
<dbReference type="Ensembl" id="ENST00000258886.13">
    <molecule id="P48200-1"/>
    <property type="protein sequence ID" value="ENSP00000258886.8"/>
    <property type="gene ID" value="ENSG00000136381.13"/>
</dbReference>
<dbReference type="Ensembl" id="ENST00000560440.5">
    <molecule id="P48200-2"/>
    <property type="protein sequence ID" value="ENSP00000452938.1"/>
    <property type="gene ID" value="ENSG00000136381.13"/>
</dbReference>
<dbReference type="GeneID" id="3658"/>
<dbReference type="KEGG" id="hsa:3658"/>
<dbReference type="MANE-Select" id="ENST00000258886.13">
    <property type="protein sequence ID" value="ENSP00000258886.8"/>
    <property type="RefSeq nucleotide sequence ID" value="NM_004136.4"/>
    <property type="RefSeq protein sequence ID" value="NP_004127.2"/>
</dbReference>
<dbReference type="UCSC" id="uc002bdq.4">
    <molecule id="P48200-1"/>
    <property type="organism name" value="human"/>
</dbReference>
<dbReference type="AGR" id="HGNC:6115"/>
<dbReference type="CTD" id="3658"/>
<dbReference type="DisGeNET" id="3658"/>
<dbReference type="GeneCards" id="IREB2"/>
<dbReference type="HGNC" id="HGNC:6115">
    <property type="gene designation" value="IREB2"/>
</dbReference>
<dbReference type="HPA" id="ENSG00000136381">
    <property type="expression patterns" value="Low tissue specificity"/>
</dbReference>
<dbReference type="MalaCards" id="IREB2"/>
<dbReference type="MIM" id="147582">
    <property type="type" value="gene"/>
</dbReference>
<dbReference type="MIM" id="618451">
    <property type="type" value="phenotype"/>
</dbReference>
<dbReference type="neXtProt" id="NX_P48200"/>
<dbReference type="OpenTargets" id="ENSG00000136381"/>
<dbReference type="PharmGKB" id="PA29914"/>
<dbReference type="VEuPathDB" id="HostDB:ENSG00000136381"/>
<dbReference type="eggNOG" id="KOG0452">
    <property type="taxonomic scope" value="Eukaryota"/>
</dbReference>
<dbReference type="GeneTree" id="ENSGT00940000157796"/>
<dbReference type="HOGENOM" id="CLU_069045_0_0_1"/>
<dbReference type="InParanoid" id="P48200"/>
<dbReference type="OMA" id="VYEPMFD"/>
<dbReference type="OrthoDB" id="2279155at2759"/>
<dbReference type="PAN-GO" id="P48200">
    <property type="GO annotations" value="7 GO annotations based on evolutionary models"/>
</dbReference>
<dbReference type="PhylomeDB" id="P48200"/>
<dbReference type="TreeFam" id="TF313476"/>
<dbReference type="PathwayCommons" id="P48200"/>
<dbReference type="Reactome" id="R-HSA-917937">
    <property type="pathway name" value="Iron uptake and transport"/>
</dbReference>
<dbReference type="SignaLink" id="P48200"/>
<dbReference type="SIGNOR" id="P48200"/>
<dbReference type="BioGRID-ORCS" id="3658">
    <property type="hits" value="101 hits in 1173 CRISPR screens"/>
</dbReference>
<dbReference type="ChiTaRS" id="IREB2">
    <property type="organism name" value="human"/>
</dbReference>
<dbReference type="GenomeRNAi" id="3658"/>
<dbReference type="Pharos" id="P48200">
    <property type="development level" value="Tbio"/>
</dbReference>
<dbReference type="PRO" id="PR:P48200"/>
<dbReference type="Proteomes" id="UP000005640">
    <property type="component" value="Chromosome 15"/>
</dbReference>
<dbReference type="RNAct" id="P48200">
    <property type="molecule type" value="protein"/>
</dbReference>
<dbReference type="Bgee" id="ENSG00000136381">
    <property type="expression patterns" value="Expressed in tibia and 193 other cell types or tissues"/>
</dbReference>
<dbReference type="ExpressionAtlas" id="P48200">
    <property type="expression patterns" value="baseline and differential"/>
</dbReference>
<dbReference type="GO" id="GO:0005737">
    <property type="term" value="C:cytoplasm"/>
    <property type="evidence" value="ECO:0000303"/>
    <property type="project" value="UniProtKB"/>
</dbReference>
<dbReference type="GO" id="GO:0005829">
    <property type="term" value="C:cytosol"/>
    <property type="evidence" value="ECO:0000318"/>
    <property type="project" value="GO_Central"/>
</dbReference>
<dbReference type="GO" id="GO:0051539">
    <property type="term" value="F:4 iron, 4 sulfur cluster binding"/>
    <property type="evidence" value="ECO:0000318"/>
    <property type="project" value="GO_Central"/>
</dbReference>
<dbReference type="GO" id="GO:0003994">
    <property type="term" value="F:aconitate hydratase activity"/>
    <property type="evidence" value="ECO:0000318"/>
    <property type="project" value="GO_Central"/>
</dbReference>
<dbReference type="GO" id="GO:0030350">
    <property type="term" value="F:iron-responsive element binding"/>
    <property type="evidence" value="ECO:0000315"/>
    <property type="project" value="UniProtKB"/>
</dbReference>
<dbReference type="GO" id="GO:0046872">
    <property type="term" value="F:metal ion binding"/>
    <property type="evidence" value="ECO:0007669"/>
    <property type="project" value="UniProtKB-KW"/>
</dbReference>
<dbReference type="GO" id="GO:0000900">
    <property type="term" value="F:mRNA regulatory element binding translation repressor activity"/>
    <property type="evidence" value="ECO:0000269"/>
    <property type="project" value="Reactome"/>
</dbReference>
<dbReference type="GO" id="GO:0003723">
    <property type="term" value="F:RNA binding"/>
    <property type="evidence" value="ECO:0000314"/>
    <property type="project" value="UniProtKB"/>
</dbReference>
<dbReference type="GO" id="GO:0034101">
    <property type="term" value="P:erythrocyte homeostasis"/>
    <property type="evidence" value="ECO:0007669"/>
    <property type="project" value="Ensembl"/>
</dbReference>
<dbReference type="GO" id="GO:0050892">
    <property type="term" value="P:intestinal absorption"/>
    <property type="evidence" value="ECO:0007669"/>
    <property type="project" value="Ensembl"/>
</dbReference>
<dbReference type="GO" id="GO:0006879">
    <property type="term" value="P:intracellular iron ion homeostasis"/>
    <property type="evidence" value="ECO:0000315"/>
    <property type="project" value="UniProtKB"/>
</dbReference>
<dbReference type="GO" id="GO:0048255">
    <property type="term" value="P:mRNA stabilization"/>
    <property type="evidence" value="ECO:0000304"/>
    <property type="project" value="UniProtKB"/>
</dbReference>
<dbReference type="GO" id="GO:0060586">
    <property type="term" value="P:multicellular organismal-level iron ion homeostasis"/>
    <property type="evidence" value="ECO:0007669"/>
    <property type="project" value="Ensembl"/>
</dbReference>
<dbReference type="GO" id="GO:0030316">
    <property type="term" value="P:osteoclast differentiation"/>
    <property type="evidence" value="ECO:0007669"/>
    <property type="project" value="Ensembl"/>
</dbReference>
<dbReference type="GO" id="GO:0009791">
    <property type="term" value="P:post-embryonic development"/>
    <property type="evidence" value="ECO:0007669"/>
    <property type="project" value="Ensembl"/>
</dbReference>
<dbReference type="GO" id="GO:0006782">
    <property type="term" value="P:protoporphyrinogen IX biosynthetic process"/>
    <property type="evidence" value="ECO:0007669"/>
    <property type="project" value="Ensembl"/>
</dbReference>
<dbReference type="CDD" id="cd01586">
    <property type="entry name" value="AcnA_IRP"/>
    <property type="match status" value="1"/>
</dbReference>
<dbReference type="CDD" id="cd01580">
    <property type="entry name" value="AcnA_IRP_Swivel"/>
    <property type="match status" value="1"/>
</dbReference>
<dbReference type="FunFam" id="3.30.499.10:FF:000005">
    <property type="entry name" value="cytoplasmic aconitate hydratase"/>
    <property type="match status" value="1"/>
</dbReference>
<dbReference type="FunFam" id="3.30.499.10:FF:000011">
    <property type="entry name" value="Iron-responsive element binding protein 2"/>
    <property type="match status" value="1"/>
</dbReference>
<dbReference type="FunFam" id="3.30.499.10:FF:000012">
    <property type="entry name" value="Iron-responsive element binding protein 2"/>
    <property type="match status" value="1"/>
</dbReference>
<dbReference type="FunFam" id="3.20.19.10:FF:000005">
    <property type="entry name" value="Iron-responsive element-binding protein 2"/>
    <property type="match status" value="1"/>
</dbReference>
<dbReference type="Gene3D" id="6.10.190.10">
    <property type="match status" value="1"/>
</dbReference>
<dbReference type="Gene3D" id="3.30.499.10">
    <property type="entry name" value="Aconitase, domain 3"/>
    <property type="match status" value="3"/>
</dbReference>
<dbReference type="Gene3D" id="3.20.19.10">
    <property type="entry name" value="Aconitase, domain 4"/>
    <property type="match status" value="1"/>
</dbReference>
<dbReference type="InterPro" id="IPR044137">
    <property type="entry name" value="AcnA_IRP_Swivel"/>
</dbReference>
<dbReference type="InterPro" id="IPR015931">
    <property type="entry name" value="Acnase/IPM_dHydase_lsu_aba_1/3"/>
</dbReference>
<dbReference type="InterPro" id="IPR001030">
    <property type="entry name" value="Acoase/IPM_deHydtase_lsu_aba"/>
</dbReference>
<dbReference type="InterPro" id="IPR015928">
    <property type="entry name" value="Aconitase/3IPM_dehydase_swvl"/>
</dbReference>
<dbReference type="InterPro" id="IPR006249">
    <property type="entry name" value="Aconitase/IRP2"/>
</dbReference>
<dbReference type="InterPro" id="IPR018136">
    <property type="entry name" value="Aconitase_4Fe-4S_BS"/>
</dbReference>
<dbReference type="InterPro" id="IPR036008">
    <property type="entry name" value="Aconitase_4Fe-4S_dom"/>
</dbReference>
<dbReference type="InterPro" id="IPR000573">
    <property type="entry name" value="AconitaseA/IPMdHydase_ssu_swvl"/>
</dbReference>
<dbReference type="NCBIfam" id="TIGR01341">
    <property type="entry name" value="aconitase_1"/>
    <property type="match status" value="1"/>
</dbReference>
<dbReference type="NCBIfam" id="NF006757">
    <property type="entry name" value="PRK09277.1"/>
    <property type="match status" value="1"/>
</dbReference>
<dbReference type="NCBIfam" id="NF009520">
    <property type="entry name" value="PRK12881.1"/>
    <property type="match status" value="1"/>
</dbReference>
<dbReference type="PANTHER" id="PTHR11670">
    <property type="entry name" value="ACONITASE/IRON-RESPONSIVE ELEMENT FAMILY MEMBER"/>
    <property type="match status" value="1"/>
</dbReference>
<dbReference type="Pfam" id="PF00330">
    <property type="entry name" value="Aconitase"/>
    <property type="match status" value="2"/>
</dbReference>
<dbReference type="Pfam" id="PF00694">
    <property type="entry name" value="Aconitase_C"/>
    <property type="match status" value="1"/>
</dbReference>
<dbReference type="PRINTS" id="PR00415">
    <property type="entry name" value="ACONITASE"/>
</dbReference>
<dbReference type="SUPFAM" id="SSF53732">
    <property type="entry name" value="Aconitase iron-sulfur domain"/>
    <property type="match status" value="1"/>
</dbReference>
<dbReference type="SUPFAM" id="SSF52016">
    <property type="entry name" value="LeuD/IlvD-like"/>
    <property type="match status" value="1"/>
</dbReference>
<dbReference type="PROSITE" id="PS00450">
    <property type="entry name" value="ACONITASE_1"/>
    <property type="match status" value="1"/>
</dbReference>
<dbReference type="PROSITE" id="PS01244">
    <property type="entry name" value="ACONITASE_2"/>
    <property type="match status" value="1"/>
</dbReference>
<protein>
    <recommendedName>
        <fullName>Iron-responsive element-binding protein 2</fullName>
        <shortName>IRE-BP 2</shortName>
    </recommendedName>
    <alternativeName>
        <fullName>Iron regulatory protein 2</fullName>
        <shortName>IRP2</shortName>
    </alternativeName>
</protein>
<name>IREB2_HUMAN</name>